<gene>
    <name evidence="1" type="primary">aat</name>
    <name type="ordered locus">Avin_28240</name>
</gene>
<comment type="function">
    <text evidence="1">Functions in the N-end rule pathway of protein degradation where it conjugates Leu, Phe and, less efficiently, Met from aminoacyl-tRNAs to the N-termini of proteins containing an N-terminal arginine or lysine.</text>
</comment>
<comment type="catalytic activity">
    <reaction evidence="1">
        <text>N-terminal L-lysyl-[protein] + L-leucyl-tRNA(Leu) = N-terminal L-leucyl-L-lysyl-[protein] + tRNA(Leu) + H(+)</text>
        <dbReference type="Rhea" id="RHEA:12340"/>
        <dbReference type="Rhea" id="RHEA-COMP:9613"/>
        <dbReference type="Rhea" id="RHEA-COMP:9622"/>
        <dbReference type="Rhea" id="RHEA-COMP:12670"/>
        <dbReference type="Rhea" id="RHEA-COMP:12671"/>
        <dbReference type="ChEBI" id="CHEBI:15378"/>
        <dbReference type="ChEBI" id="CHEBI:65249"/>
        <dbReference type="ChEBI" id="CHEBI:78442"/>
        <dbReference type="ChEBI" id="CHEBI:78494"/>
        <dbReference type="ChEBI" id="CHEBI:133043"/>
        <dbReference type="EC" id="2.3.2.6"/>
    </reaction>
</comment>
<comment type="catalytic activity">
    <reaction evidence="1">
        <text>N-terminal L-arginyl-[protein] + L-leucyl-tRNA(Leu) = N-terminal L-leucyl-L-arginyl-[protein] + tRNA(Leu) + H(+)</text>
        <dbReference type="Rhea" id="RHEA:50416"/>
        <dbReference type="Rhea" id="RHEA-COMP:9613"/>
        <dbReference type="Rhea" id="RHEA-COMP:9622"/>
        <dbReference type="Rhea" id="RHEA-COMP:12672"/>
        <dbReference type="Rhea" id="RHEA-COMP:12673"/>
        <dbReference type="ChEBI" id="CHEBI:15378"/>
        <dbReference type="ChEBI" id="CHEBI:64719"/>
        <dbReference type="ChEBI" id="CHEBI:78442"/>
        <dbReference type="ChEBI" id="CHEBI:78494"/>
        <dbReference type="ChEBI" id="CHEBI:133044"/>
        <dbReference type="EC" id="2.3.2.6"/>
    </reaction>
</comment>
<comment type="catalytic activity">
    <reaction evidence="1">
        <text>L-phenylalanyl-tRNA(Phe) + an N-terminal L-alpha-aminoacyl-[protein] = an N-terminal L-phenylalanyl-L-alpha-aminoacyl-[protein] + tRNA(Phe)</text>
        <dbReference type="Rhea" id="RHEA:43632"/>
        <dbReference type="Rhea" id="RHEA-COMP:9668"/>
        <dbReference type="Rhea" id="RHEA-COMP:9699"/>
        <dbReference type="Rhea" id="RHEA-COMP:10636"/>
        <dbReference type="Rhea" id="RHEA-COMP:10637"/>
        <dbReference type="ChEBI" id="CHEBI:78442"/>
        <dbReference type="ChEBI" id="CHEBI:78531"/>
        <dbReference type="ChEBI" id="CHEBI:78597"/>
        <dbReference type="ChEBI" id="CHEBI:83561"/>
        <dbReference type="EC" id="2.3.2.6"/>
    </reaction>
</comment>
<comment type="subcellular location">
    <subcellularLocation>
        <location evidence="1">Cytoplasm</location>
    </subcellularLocation>
</comment>
<comment type="similarity">
    <text evidence="1">Belongs to the L/F-transferase family.</text>
</comment>
<protein>
    <recommendedName>
        <fullName evidence="1">Leucyl/phenylalanyl-tRNA--protein transferase</fullName>
        <ecNumber evidence="1">2.3.2.6</ecNumber>
    </recommendedName>
    <alternativeName>
        <fullName evidence="1">L/F-transferase</fullName>
    </alternativeName>
    <alternativeName>
        <fullName evidence="1">Leucyltransferase</fullName>
    </alternativeName>
    <alternativeName>
        <fullName evidence="1">Phenyalanyltransferase</fullName>
    </alternativeName>
</protein>
<organism>
    <name type="scientific">Azotobacter vinelandii (strain DJ / ATCC BAA-1303)</name>
    <dbReference type="NCBI Taxonomy" id="322710"/>
    <lineage>
        <taxon>Bacteria</taxon>
        <taxon>Pseudomonadati</taxon>
        <taxon>Pseudomonadota</taxon>
        <taxon>Gammaproteobacteria</taxon>
        <taxon>Pseudomonadales</taxon>
        <taxon>Pseudomonadaceae</taxon>
        <taxon>Azotobacter</taxon>
    </lineage>
</organism>
<feature type="chain" id="PRO_1000212564" description="Leucyl/phenylalanyl-tRNA--protein transferase">
    <location>
        <begin position="1"/>
        <end position="226"/>
    </location>
</feature>
<evidence type="ECO:0000255" key="1">
    <source>
        <dbReference type="HAMAP-Rule" id="MF_00688"/>
    </source>
</evidence>
<keyword id="KW-0012">Acyltransferase</keyword>
<keyword id="KW-0963">Cytoplasm</keyword>
<keyword id="KW-0808">Transferase</keyword>
<accession>C1DKZ4</accession>
<sequence length="226" mass="25700">MLTCLQRDSLSFPPLERALHQPNGLLAVGGDLSAERLIQAYRHGCFPWYQAGQPILWWSPDPRTVLFPRELHVSRSLRKVLRQERFQVSFDRDFAAVIQACAGPRDYADGTWITPEMRKAYQELHHRGIAHSVEVWQNGVLVGGLYGLAIGQLFFGESMFSHADNASKVGFATLVERLERWGFVLIDCQMPTQHLQSLGARSIPRTEFSDYLMHHLDLPSTADWIA</sequence>
<dbReference type="EC" id="2.3.2.6" evidence="1"/>
<dbReference type="EMBL" id="CP001157">
    <property type="protein sequence ID" value="ACO78996.1"/>
    <property type="molecule type" value="Genomic_DNA"/>
</dbReference>
<dbReference type="RefSeq" id="WP_012701384.1">
    <property type="nucleotide sequence ID" value="NC_012560.1"/>
</dbReference>
<dbReference type="SMR" id="C1DKZ4"/>
<dbReference type="STRING" id="322710.Avin_28240"/>
<dbReference type="EnsemblBacteria" id="ACO78996">
    <property type="protein sequence ID" value="ACO78996"/>
    <property type="gene ID" value="Avin_28240"/>
</dbReference>
<dbReference type="GeneID" id="88185942"/>
<dbReference type="KEGG" id="avn:Avin_28240"/>
<dbReference type="eggNOG" id="COG2360">
    <property type="taxonomic scope" value="Bacteria"/>
</dbReference>
<dbReference type="HOGENOM" id="CLU_075045_0_0_6"/>
<dbReference type="OrthoDB" id="9790282at2"/>
<dbReference type="Proteomes" id="UP000002424">
    <property type="component" value="Chromosome"/>
</dbReference>
<dbReference type="GO" id="GO:0005737">
    <property type="term" value="C:cytoplasm"/>
    <property type="evidence" value="ECO:0007669"/>
    <property type="project" value="UniProtKB-SubCell"/>
</dbReference>
<dbReference type="GO" id="GO:0008914">
    <property type="term" value="F:leucyl-tRNA--protein transferase activity"/>
    <property type="evidence" value="ECO:0007669"/>
    <property type="project" value="UniProtKB-UniRule"/>
</dbReference>
<dbReference type="GO" id="GO:0030163">
    <property type="term" value="P:protein catabolic process"/>
    <property type="evidence" value="ECO:0007669"/>
    <property type="project" value="UniProtKB-UniRule"/>
</dbReference>
<dbReference type="FunFam" id="3.30.70.3550:FF:000001">
    <property type="entry name" value="Leucyl/phenylalanyl-tRNA--protein transferase"/>
    <property type="match status" value="1"/>
</dbReference>
<dbReference type="FunFam" id="3.40.630.70:FF:000001">
    <property type="entry name" value="Leucyl/phenylalanyl-tRNA--protein transferase"/>
    <property type="match status" value="1"/>
</dbReference>
<dbReference type="Gene3D" id="3.40.630.70">
    <property type="entry name" value="Leucyl/phenylalanyl-tRNA-protein transferase, C-terminal domain"/>
    <property type="match status" value="1"/>
</dbReference>
<dbReference type="Gene3D" id="3.30.70.3550">
    <property type="entry name" value="Leucyl/phenylalanyl-tRNA-protein transferase, N-terminal domain"/>
    <property type="match status" value="1"/>
</dbReference>
<dbReference type="HAMAP" id="MF_00688">
    <property type="entry name" value="Leu_Phe_trans"/>
    <property type="match status" value="1"/>
</dbReference>
<dbReference type="InterPro" id="IPR016181">
    <property type="entry name" value="Acyl_CoA_acyltransferase"/>
</dbReference>
<dbReference type="InterPro" id="IPR004616">
    <property type="entry name" value="Leu/Phe-tRNA_Trfase"/>
</dbReference>
<dbReference type="InterPro" id="IPR042203">
    <property type="entry name" value="Leu/Phe-tRNA_Trfase_C"/>
</dbReference>
<dbReference type="InterPro" id="IPR042221">
    <property type="entry name" value="Leu/Phe-tRNA_Trfase_N"/>
</dbReference>
<dbReference type="NCBIfam" id="TIGR00667">
    <property type="entry name" value="aat"/>
    <property type="match status" value="1"/>
</dbReference>
<dbReference type="PANTHER" id="PTHR30098">
    <property type="entry name" value="LEUCYL/PHENYLALANYL-TRNA--PROTEIN TRANSFERASE"/>
    <property type="match status" value="1"/>
</dbReference>
<dbReference type="PANTHER" id="PTHR30098:SF2">
    <property type="entry name" value="LEUCYL_PHENYLALANYL-TRNA--PROTEIN TRANSFERASE"/>
    <property type="match status" value="1"/>
</dbReference>
<dbReference type="Pfam" id="PF03588">
    <property type="entry name" value="Leu_Phe_trans"/>
    <property type="match status" value="1"/>
</dbReference>
<dbReference type="SUPFAM" id="SSF55729">
    <property type="entry name" value="Acyl-CoA N-acyltransferases (Nat)"/>
    <property type="match status" value="1"/>
</dbReference>
<name>LFTR_AZOVD</name>
<reference key="1">
    <citation type="journal article" date="2009" name="J. Bacteriol.">
        <title>Genome sequence of Azotobacter vinelandii, an obligate aerobe specialized to support diverse anaerobic metabolic processes.</title>
        <authorList>
            <person name="Setubal J.C."/>
            <person name="Dos Santos P."/>
            <person name="Goldman B.S."/>
            <person name="Ertesvaag H."/>
            <person name="Espin G."/>
            <person name="Rubio L.M."/>
            <person name="Valla S."/>
            <person name="Almeida N.F."/>
            <person name="Balasubramanian D."/>
            <person name="Cromes L."/>
            <person name="Curatti L."/>
            <person name="Du Z."/>
            <person name="Godsy E."/>
            <person name="Goodner B."/>
            <person name="Hellner-Burris K."/>
            <person name="Hernandez J.A."/>
            <person name="Houmiel K."/>
            <person name="Imperial J."/>
            <person name="Kennedy C."/>
            <person name="Larson T.J."/>
            <person name="Latreille P."/>
            <person name="Ligon L.S."/>
            <person name="Lu J."/>
            <person name="Maerk M."/>
            <person name="Miller N.M."/>
            <person name="Norton S."/>
            <person name="O'Carroll I.P."/>
            <person name="Paulsen I."/>
            <person name="Raulfs E.C."/>
            <person name="Roemer R."/>
            <person name="Rosser J."/>
            <person name="Segura D."/>
            <person name="Slater S."/>
            <person name="Stricklin S.L."/>
            <person name="Studholme D.J."/>
            <person name="Sun J."/>
            <person name="Viana C.J."/>
            <person name="Wallin E."/>
            <person name="Wang B."/>
            <person name="Wheeler C."/>
            <person name="Zhu H."/>
            <person name="Dean D.R."/>
            <person name="Dixon R."/>
            <person name="Wood D."/>
        </authorList>
    </citation>
    <scope>NUCLEOTIDE SEQUENCE [LARGE SCALE GENOMIC DNA]</scope>
    <source>
        <strain>DJ / ATCC BAA-1303</strain>
    </source>
</reference>
<proteinExistence type="inferred from homology"/>